<comment type="function">
    <text evidence="1">Catalyzes the transfer of a ribosyl phosphate group from 5-phosphoribose 1-diphosphate to orotate, leading to the formation of orotidine monophosphate (OMP).</text>
</comment>
<comment type="catalytic activity">
    <reaction evidence="1">
        <text>orotidine 5'-phosphate + diphosphate = orotate + 5-phospho-alpha-D-ribose 1-diphosphate</text>
        <dbReference type="Rhea" id="RHEA:10380"/>
        <dbReference type="ChEBI" id="CHEBI:30839"/>
        <dbReference type="ChEBI" id="CHEBI:33019"/>
        <dbReference type="ChEBI" id="CHEBI:57538"/>
        <dbReference type="ChEBI" id="CHEBI:58017"/>
        <dbReference type="EC" id="2.4.2.10"/>
    </reaction>
</comment>
<comment type="cofactor">
    <cofactor evidence="1">
        <name>Mg(2+)</name>
        <dbReference type="ChEBI" id="CHEBI:18420"/>
    </cofactor>
</comment>
<comment type="pathway">
    <text evidence="1">Pyrimidine metabolism; UMP biosynthesis via de novo pathway; UMP from orotate: step 1/2.</text>
</comment>
<comment type="subunit">
    <text evidence="1">Homodimer.</text>
</comment>
<comment type="similarity">
    <text evidence="1">Belongs to the purine/pyrimidine phosphoribosyltransferase family. PyrE subfamily.</text>
</comment>
<evidence type="ECO:0000255" key="1">
    <source>
        <dbReference type="HAMAP-Rule" id="MF_01208"/>
    </source>
</evidence>
<reference key="1">
    <citation type="submission" date="2007-09" db="EMBL/GenBank/DDBJ databases">
        <title>Complete sequence of chromosome of Serratia proteamaculans 568.</title>
        <authorList>
            <consortium name="US DOE Joint Genome Institute"/>
            <person name="Copeland A."/>
            <person name="Lucas S."/>
            <person name="Lapidus A."/>
            <person name="Barry K."/>
            <person name="Glavina del Rio T."/>
            <person name="Dalin E."/>
            <person name="Tice H."/>
            <person name="Pitluck S."/>
            <person name="Chain P."/>
            <person name="Malfatti S."/>
            <person name="Shin M."/>
            <person name="Vergez L."/>
            <person name="Schmutz J."/>
            <person name="Larimer F."/>
            <person name="Land M."/>
            <person name="Hauser L."/>
            <person name="Kyrpides N."/>
            <person name="Kim E."/>
            <person name="Taghavi S."/>
            <person name="Newman L."/>
            <person name="Vangronsveld J."/>
            <person name="van der Lelie D."/>
            <person name="Richardson P."/>
        </authorList>
    </citation>
    <scope>NUCLEOTIDE SEQUENCE [LARGE SCALE GENOMIC DNA]</scope>
    <source>
        <strain>568</strain>
    </source>
</reference>
<sequence>MKAYQRQFIEFALNKQVLKFGEFTLKSGRTSPYFFNAGLFNTGRDLALLGRFYAEALVDSGIEFDLLFGPAYKGIPIATTTAVALAEHHERDVPYCFNRKEAKTHGEGGTLVGSPLQGRVMLVDDVITAGTAIRESMEIIGAGGATLAGVLISLDRQERGRADISAIQEVERDYHCKVISIVTLKDLIVYLEEKPEMADHLAAVRAYREQYGV</sequence>
<organism>
    <name type="scientific">Serratia proteamaculans (strain 568)</name>
    <dbReference type="NCBI Taxonomy" id="399741"/>
    <lineage>
        <taxon>Bacteria</taxon>
        <taxon>Pseudomonadati</taxon>
        <taxon>Pseudomonadota</taxon>
        <taxon>Gammaproteobacteria</taxon>
        <taxon>Enterobacterales</taxon>
        <taxon>Yersiniaceae</taxon>
        <taxon>Serratia</taxon>
    </lineage>
</organism>
<feature type="chain" id="PRO_1000066294" description="Orotate phosphoribosyltransferase">
    <location>
        <begin position="1"/>
        <end position="213"/>
    </location>
</feature>
<feature type="binding site" description="in other chain" evidence="1">
    <location>
        <position position="26"/>
    </location>
    <ligand>
        <name>5-phospho-alpha-D-ribose 1-diphosphate</name>
        <dbReference type="ChEBI" id="CHEBI:58017"/>
        <note>ligand shared between dimeric partners</note>
    </ligand>
</feature>
<feature type="binding site" evidence="1">
    <location>
        <begin position="34"/>
        <end position="35"/>
    </location>
    <ligand>
        <name>orotate</name>
        <dbReference type="ChEBI" id="CHEBI:30839"/>
    </ligand>
</feature>
<feature type="binding site" description="in other chain" evidence="1">
    <location>
        <begin position="72"/>
        <end position="73"/>
    </location>
    <ligand>
        <name>5-phospho-alpha-D-ribose 1-diphosphate</name>
        <dbReference type="ChEBI" id="CHEBI:58017"/>
        <note>ligand shared between dimeric partners</note>
    </ligand>
</feature>
<feature type="binding site" evidence="1">
    <location>
        <position position="99"/>
    </location>
    <ligand>
        <name>5-phospho-alpha-D-ribose 1-diphosphate</name>
        <dbReference type="ChEBI" id="CHEBI:58017"/>
        <note>ligand shared between dimeric partners</note>
    </ligand>
</feature>
<feature type="binding site" description="in other chain" evidence="1">
    <location>
        <position position="100"/>
    </location>
    <ligand>
        <name>5-phospho-alpha-D-ribose 1-diphosphate</name>
        <dbReference type="ChEBI" id="CHEBI:58017"/>
        <note>ligand shared between dimeric partners</note>
    </ligand>
</feature>
<feature type="binding site" evidence="1">
    <location>
        <position position="103"/>
    </location>
    <ligand>
        <name>5-phospho-alpha-D-ribose 1-diphosphate</name>
        <dbReference type="ChEBI" id="CHEBI:58017"/>
        <note>ligand shared between dimeric partners</note>
    </ligand>
</feature>
<feature type="binding site" evidence="1">
    <location>
        <position position="105"/>
    </location>
    <ligand>
        <name>5-phospho-alpha-D-ribose 1-diphosphate</name>
        <dbReference type="ChEBI" id="CHEBI:58017"/>
        <note>ligand shared between dimeric partners</note>
    </ligand>
</feature>
<feature type="binding site" description="in other chain" evidence="1">
    <location>
        <begin position="124"/>
        <end position="132"/>
    </location>
    <ligand>
        <name>5-phospho-alpha-D-ribose 1-diphosphate</name>
        <dbReference type="ChEBI" id="CHEBI:58017"/>
        <note>ligand shared between dimeric partners</note>
    </ligand>
</feature>
<feature type="binding site" evidence="1">
    <location>
        <position position="128"/>
    </location>
    <ligand>
        <name>orotate</name>
        <dbReference type="ChEBI" id="CHEBI:30839"/>
    </ligand>
</feature>
<feature type="binding site" evidence="1">
    <location>
        <position position="156"/>
    </location>
    <ligand>
        <name>orotate</name>
        <dbReference type="ChEBI" id="CHEBI:30839"/>
    </ligand>
</feature>
<proteinExistence type="inferred from homology"/>
<keyword id="KW-0328">Glycosyltransferase</keyword>
<keyword id="KW-0460">Magnesium</keyword>
<keyword id="KW-0665">Pyrimidine biosynthesis</keyword>
<keyword id="KW-0808">Transferase</keyword>
<name>PYRE_SERP5</name>
<accession>A8GLE9</accession>
<protein>
    <recommendedName>
        <fullName evidence="1">Orotate phosphoribosyltransferase</fullName>
        <shortName evidence="1">OPRT</shortName>
        <shortName evidence="1">OPRTase</shortName>
        <ecNumber evidence="1">2.4.2.10</ecNumber>
    </recommendedName>
</protein>
<dbReference type="EC" id="2.4.2.10" evidence="1"/>
<dbReference type="EMBL" id="CP000826">
    <property type="protein sequence ID" value="ABV43939.1"/>
    <property type="molecule type" value="Genomic_DNA"/>
</dbReference>
<dbReference type="SMR" id="A8GLE9"/>
<dbReference type="STRING" id="399741.Spro_4846"/>
<dbReference type="KEGG" id="spe:Spro_4846"/>
<dbReference type="eggNOG" id="COG0461">
    <property type="taxonomic scope" value="Bacteria"/>
</dbReference>
<dbReference type="HOGENOM" id="CLU_074878_0_1_6"/>
<dbReference type="OrthoDB" id="9779060at2"/>
<dbReference type="UniPathway" id="UPA00070">
    <property type="reaction ID" value="UER00119"/>
</dbReference>
<dbReference type="GO" id="GO:0005737">
    <property type="term" value="C:cytoplasm"/>
    <property type="evidence" value="ECO:0007669"/>
    <property type="project" value="TreeGrafter"/>
</dbReference>
<dbReference type="GO" id="GO:0000287">
    <property type="term" value="F:magnesium ion binding"/>
    <property type="evidence" value="ECO:0007669"/>
    <property type="project" value="UniProtKB-UniRule"/>
</dbReference>
<dbReference type="GO" id="GO:0004588">
    <property type="term" value="F:orotate phosphoribosyltransferase activity"/>
    <property type="evidence" value="ECO:0007669"/>
    <property type="project" value="UniProtKB-UniRule"/>
</dbReference>
<dbReference type="GO" id="GO:0006207">
    <property type="term" value="P:'de novo' pyrimidine nucleobase biosynthetic process"/>
    <property type="evidence" value="ECO:0007669"/>
    <property type="project" value="TreeGrafter"/>
</dbReference>
<dbReference type="GO" id="GO:0044205">
    <property type="term" value="P:'de novo' UMP biosynthetic process"/>
    <property type="evidence" value="ECO:0007669"/>
    <property type="project" value="UniProtKB-UniRule"/>
</dbReference>
<dbReference type="GO" id="GO:0046132">
    <property type="term" value="P:pyrimidine ribonucleoside biosynthetic process"/>
    <property type="evidence" value="ECO:0007669"/>
    <property type="project" value="TreeGrafter"/>
</dbReference>
<dbReference type="CDD" id="cd06223">
    <property type="entry name" value="PRTases_typeI"/>
    <property type="match status" value="1"/>
</dbReference>
<dbReference type="FunFam" id="3.40.50.2020:FF:000008">
    <property type="entry name" value="Orotate phosphoribosyltransferase"/>
    <property type="match status" value="1"/>
</dbReference>
<dbReference type="Gene3D" id="3.40.50.2020">
    <property type="match status" value="1"/>
</dbReference>
<dbReference type="HAMAP" id="MF_01208">
    <property type="entry name" value="PyrE"/>
    <property type="match status" value="1"/>
</dbReference>
<dbReference type="InterPro" id="IPR023031">
    <property type="entry name" value="OPRT"/>
</dbReference>
<dbReference type="InterPro" id="IPR004467">
    <property type="entry name" value="Or_phspho_trans_dom"/>
</dbReference>
<dbReference type="InterPro" id="IPR000836">
    <property type="entry name" value="PRibTrfase_dom"/>
</dbReference>
<dbReference type="InterPro" id="IPR029057">
    <property type="entry name" value="PRTase-like"/>
</dbReference>
<dbReference type="NCBIfam" id="TIGR00336">
    <property type="entry name" value="pyrE"/>
    <property type="match status" value="1"/>
</dbReference>
<dbReference type="PANTHER" id="PTHR46683">
    <property type="entry name" value="OROTATE PHOSPHORIBOSYLTRANSFERASE 1-RELATED"/>
    <property type="match status" value="1"/>
</dbReference>
<dbReference type="PANTHER" id="PTHR46683:SF1">
    <property type="entry name" value="OROTATE PHOSPHORIBOSYLTRANSFERASE 1-RELATED"/>
    <property type="match status" value="1"/>
</dbReference>
<dbReference type="Pfam" id="PF00156">
    <property type="entry name" value="Pribosyltran"/>
    <property type="match status" value="1"/>
</dbReference>
<dbReference type="SUPFAM" id="SSF53271">
    <property type="entry name" value="PRTase-like"/>
    <property type="match status" value="1"/>
</dbReference>
<dbReference type="PROSITE" id="PS00103">
    <property type="entry name" value="PUR_PYR_PR_TRANSFER"/>
    <property type="match status" value="1"/>
</dbReference>
<gene>
    <name evidence="1" type="primary">pyrE</name>
    <name type="ordered locus">Spro_4846</name>
</gene>